<comment type="function">
    <text evidence="1">Plays an important role in the de novo pathway and in the salvage pathway of purine nucleotide biosynthesis. Catalyzes the first committed step in the biosynthesis of AMP from IMP (By similarity).</text>
</comment>
<comment type="catalytic activity">
    <reaction evidence="2">
        <text>IMP + L-aspartate + GTP = N(6)-(1,2-dicarboxyethyl)-AMP + GDP + phosphate + 2 H(+)</text>
        <dbReference type="Rhea" id="RHEA:15753"/>
        <dbReference type="ChEBI" id="CHEBI:15378"/>
        <dbReference type="ChEBI" id="CHEBI:29991"/>
        <dbReference type="ChEBI" id="CHEBI:37565"/>
        <dbReference type="ChEBI" id="CHEBI:43474"/>
        <dbReference type="ChEBI" id="CHEBI:57567"/>
        <dbReference type="ChEBI" id="CHEBI:58053"/>
        <dbReference type="ChEBI" id="CHEBI:58189"/>
        <dbReference type="EC" id="6.3.4.4"/>
    </reaction>
</comment>
<comment type="cofactor">
    <cofactor evidence="2">
        <name>Mg(2+)</name>
        <dbReference type="ChEBI" id="CHEBI:18420"/>
    </cofactor>
    <text evidence="2">Binds 1 Mg(2+) ion per subunit.</text>
</comment>
<comment type="pathway">
    <text evidence="2">Purine metabolism; AMP biosynthesis via de novo pathway; AMP from IMP: step 1/2.</text>
</comment>
<comment type="subunit">
    <text evidence="2">Homodimer.</text>
</comment>
<comment type="subcellular location">
    <subcellularLocation>
        <location evidence="2">Cytoplasm</location>
    </subcellularLocation>
</comment>
<comment type="similarity">
    <text evidence="2">Belongs to the adenylosuccinate synthetase family.</text>
</comment>
<gene>
    <name type="ordered locus">KLTH0B08118g</name>
</gene>
<protein>
    <recommendedName>
        <fullName evidence="2">Adenylosuccinate synthetase</fullName>
        <shortName evidence="2">AMPSase</shortName>
        <shortName evidence="2">AdSS</shortName>
        <ecNumber evidence="2">6.3.4.4</ecNumber>
    </recommendedName>
    <alternativeName>
        <fullName evidence="2">IMP--aspartate ligase</fullName>
    </alternativeName>
</protein>
<dbReference type="EC" id="6.3.4.4" evidence="2"/>
<dbReference type="EMBL" id="CU928166">
    <property type="protein sequence ID" value="CAR21703.1"/>
    <property type="molecule type" value="Genomic_DNA"/>
</dbReference>
<dbReference type="RefSeq" id="XP_002552141.1">
    <property type="nucleotide sequence ID" value="XM_002552095.1"/>
</dbReference>
<dbReference type="SMR" id="C5DD42"/>
<dbReference type="FunCoup" id="C5DD42">
    <property type="interactions" value="865"/>
</dbReference>
<dbReference type="STRING" id="559295.C5DD42"/>
<dbReference type="GeneID" id="8290981"/>
<dbReference type="KEGG" id="lth:KLTH0B08118g"/>
<dbReference type="eggNOG" id="KOG1355">
    <property type="taxonomic scope" value="Eukaryota"/>
</dbReference>
<dbReference type="HOGENOM" id="CLU_029848_3_2_1"/>
<dbReference type="InParanoid" id="C5DD42"/>
<dbReference type="OMA" id="FHHAKPI"/>
<dbReference type="OrthoDB" id="10265645at2759"/>
<dbReference type="UniPathway" id="UPA00075">
    <property type="reaction ID" value="UER00335"/>
</dbReference>
<dbReference type="Proteomes" id="UP000002036">
    <property type="component" value="Chromosome B"/>
</dbReference>
<dbReference type="GO" id="GO:0005737">
    <property type="term" value="C:cytoplasm"/>
    <property type="evidence" value="ECO:0007669"/>
    <property type="project" value="UniProtKB-SubCell"/>
</dbReference>
<dbReference type="GO" id="GO:0004019">
    <property type="term" value="F:adenylosuccinate synthase activity"/>
    <property type="evidence" value="ECO:0007669"/>
    <property type="project" value="UniProtKB-UniRule"/>
</dbReference>
<dbReference type="GO" id="GO:0005525">
    <property type="term" value="F:GTP binding"/>
    <property type="evidence" value="ECO:0007669"/>
    <property type="project" value="UniProtKB-UniRule"/>
</dbReference>
<dbReference type="GO" id="GO:0000287">
    <property type="term" value="F:magnesium ion binding"/>
    <property type="evidence" value="ECO:0007669"/>
    <property type="project" value="UniProtKB-UniRule"/>
</dbReference>
<dbReference type="GO" id="GO:0044208">
    <property type="term" value="P:'de novo' AMP biosynthetic process"/>
    <property type="evidence" value="ECO:0007669"/>
    <property type="project" value="UniProtKB-UniRule"/>
</dbReference>
<dbReference type="GO" id="GO:0046040">
    <property type="term" value="P:IMP metabolic process"/>
    <property type="evidence" value="ECO:0007669"/>
    <property type="project" value="TreeGrafter"/>
</dbReference>
<dbReference type="CDD" id="cd03108">
    <property type="entry name" value="AdSS"/>
    <property type="match status" value="1"/>
</dbReference>
<dbReference type="FunFam" id="3.90.170.10:FF:000001">
    <property type="entry name" value="Adenylosuccinate synthetase"/>
    <property type="match status" value="1"/>
</dbReference>
<dbReference type="FunFam" id="1.10.300.10:FF:000002">
    <property type="entry name" value="Adenylosuccinate synthetase, chloroplastic"/>
    <property type="match status" value="1"/>
</dbReference>
<dbReference type="Gene3D" id="3.40.440.10">
    <property type="entry name" value="Adenylosuccinate Synthetase, subunit A, domain 1"/>
    <property type="match status" value="1"/>
</dbReference>
<dbReference type="Gene3D" id="1.10.300.10">
    <property type="entry name" value="Adenylosuccinate Synthetase, subunit A, domain 2"/>
    <property type="match status" value="1"/>
</dbReference>
<dbReference type="Gene3D" id="3.90.170.10">
    <property type="entry name" value="Adenylosuccinate Synthetase, subunit A, domain 3"/>
    <property type="match status" value="1"/>
</dbReference>
<dbReference type="HAMAP" id="MF_00011">
    <property type="entry name" value="Adenylosucc_synth"/>
    <property type="match status" value="1"/>
</dbReference>
<dbReference type="InterPro" id="IPR018220">
    <property type="entry name" value="Adenylosuccin_syn_GTP-bd"/>
</dbReference>
<dbReference type="InterPro" id="IPR033128">
    <property type="entry name" value="Adenylosuccin_syn_Lys_AS"/>
</dbReference>
<dbReference type="InterPro" id="IPR042109">
    <property type="entry name" value="Adenylosuccinate_synth_dom1"/>
</dbReference>
<dbReference type="InterPro" id="IPR042110">
    <property type="entry name" value="Adenylosuccinate_synth_dom2"/>
</dbReference>
<dbReference type="InterPro" id="IPR042111">
    <property type="entry name" value="Adenylosuccinate_synth_dom3"/>
</dbReference>
<dbReference type="InterPro" id="IPR001114">
    <property type="entry name" value="Adenylosuccinate_synthetase"/>
</dbReference>
<dbReference type="InterPro" id="IPR027417">
    <property type="entry name" value="P-loop_NTPase"/>
</dbReference>
<dbReference type="NCBIfam" id="NF002223">
    <property type="entry name" value="PRK01117.1"/>
    <property type="match status" value="1"/>
</dbReference>
<dbReference type="NCBIfam" id="TIGR00184">
    <property type="entry name" value="purA"/>
    <property type="match status" value="1"/>
</dbReference>
<dbReference type="PANTHER" id="PTHR11846">
    <property type="entry name" value="ADENYLOSUCCINATE SYNTHETASE"/>
    <property type="match status" value="1"/>
</dbReference>
<dbReference type="PANTHER" id="PTHR11846:SF0">
    <property type="entry name" value="ADENYLOSUCCINATE SYNTHETASE"/>
    <property type="match status" value="1"/>
</dbReference>
<dbReference type="Pfam" id="PF00709">
    <property type="entry name" value="Adenylsucc_synt"/>
    <property type="match status" value="1"/>
</dbReference>
<dbReference type="SMART" id="SM00788">
    <property type="entry name" value="Adenylsucc_synt"/>
    <property type="match status" value="1"/>
</dbReference>
<dbReference type="SUPFAM" id="SSF52540">
    <property type="entry name" value="P-loop containing nucleoside triphosphate hydrolases"/>
    <property type="match status" value="1"/>
</dbReference>
<dbReference type="PROSITE" id="PS01266">
    <property type="entry name" value="ADENYLOSUCCIN_SYN_1"/>
    <property type="match status" value="1"/>
</dbReference>
<dbReference type="PROSITE" id="PS00513">
    <property type="entry name" value="ADENYLOSUCCIN_SYN_2"/>
    <property type="match status" value="1"/>
</dbReference>
<accession>C5DD42</accession>
<proteinExistence type="inferred from homology"/>
<sequence>MVNVVLGSQWGDEGKGKLVDLLVGKYDIVARAAGGNNAGHTIVVKGVKYDFHMLPSGLVNPNCQNLIGNGVVMHVPSFFAELEQLEAKGLTDARERLFISSRAHLVFDFHQRTDKLREAELSGASTDGKNIGTTGKGIGPTYATKASRSGLRVHHLVNDEPGAWEEFETKYRRLVQTRQQRYGDFEYDADAELARYKKYREELKPFVVDSVVFMHNAIRDNKKILVEGANALMLDIDFGTYPYVTSSNTGIGGVCTGLGLPPRVIDEVYGVVKAYTTRVGEGPFPTEQLNESGEKLQNIGAEFGVTTGRKRRCGWLDLVVLKYSTLINGYTSLNITKLDVLDTFKEIPVGVSYTLRGKKLDLFPEDLNVLGKVDVEYVTLPGWEQDITKITEYEDLPENAKKYLKFIEDFVGVPIEWVGTGPARESMVYKQVSK</sequence>
<feature type="chain" id="PRO_0000399340" description="Adenylosuccinate synthetase">
    <location>
        <begin position="1"/>
        <end position="434"/>
    </location>
</feature>
<feature type="active site" description="Proton acceptor" evidence="2">
    <location>
        <position position="12"/>
    </location>
</feature>
<feature type="active site" description="Proton donor" evidence="2">
    <location>
        <position position="40"/>
    </location>
</feature>
<feature type="binding site" evidence="2">
    <location>
        <begin position="11"/>
        <end position="17"/>
    </location>
    <ligand>
        <name>GTP</name>
        <dbReference type="ChEBI" id="CHEBI:37565"/>
    </ligand>
</feature>
<feature type="binding site" description="in other chain" evidence="2">
    <location>
        <begin position="12"/>
        <end position="15"/>
    </location>
    <ligand>
        <name>IMP</name>
        <dbReference type="ChEBI" id="CHEBI:58053"/>
        <note>ligand shared between dimeric partners</note>
    </ligand>
</feature>
<feature type="binding site" evidence="2">
    <location>
        <position position="12"/>
    </location>
    <ligand>
        <name>Mg(2+)</name>
        <dbReference type="ChEBI" id="CHEBI:18420"/>
    </ligand>
</feature>
<feature type="binding site" description="in other chain" evidence="2">
    <location>
        <begin position="37"/>
        <end position="40"/>
    </location>
    <ligand>
        <name>IMP</name>
        <dbReference type="ChEBI" id="CHEBI:58053"/>
        <note>ligand shared between dimeric partners</note>
    </ligand>
</feature>
<feature type="binding site" evidence="2">
    <location>
        <begin position="39"/>
        <end position="41"/>
    </location>
    <ligand>
        <name>GTP</name>
        <dbReference type="ChEBI" id="CHEBI:37565"/>
    </ligand>
</feature>
<feature type="binding site" evidence="2">
    <location>
        <position position="39"/>
    </location>
    <ligand>
        <name>Mg(2+)</name>
        <dbReference type="ChEBI" id="CHEBI:18420"/>
    </ligand>
</feature>
<feature type="binding site" description="in other chain" evidence="2">
    <location>
        <position position="134"/>
    </location>
    <ligand>
        <name>IMP</name>
        <dbReference type="ChEBI" id="CHEBI:58053"/>
        <note>ligand shared between dimeric partners</note>
    </ligand>
</feature>
<feature type="binding site" evidence="2">
    <location>
        <position position="148"/>
    </location>
    <ligand>
        <name>IMP</name>
        <dbReference type="ChEBI" id="CHEBI:58053"/>
        <note>ligand shared between dimeric partners</note>
    </ligand>
</feature>
<feature type="binding site" description="in other chain" evidence="2">
    <location>
        <position position="230"/>
    </location>
    <ligand>
        <name>IMP</name>
        <dbReference type="ChEBI" id="CHEBI:58053"/>
        <note>ligand shared between dimeric partners</note>
    </ligand>
</feature>
<feature type="binding site" description="in other chain" evidence="2">
    <location>
        <position position="245"/>
    </location>
    <ligand>
        <name>IMP</name>
        <dbReference type="ChEBI" id="CHEBI:58053"/>
        <note>ligand shared between dimeric partners</note>
    </ligand>
</feature>
<feature type="binding site" evidence="2">
    <location>
        <begin position="305"/>
        <end position="311"/>
    </location>
    <ligand>
        <name>substrate</name>
    </ligand>
</feature>
<feature type="binding site" description="in other chain" evidence="2">
    <location>
        <position position="309"/>
    </location>
    <ligand>
        <name>IMP</name>
        <dbReference type="ChEBI" id="CHEBI:58053"/>
        <note>ligand shared between dimeric partners</note>
    </ligand>
</feature>
<feature type="binding site" evidence="2">
    <location>
        <position position="311"/>
    </location>
    <ligand>
        <name>GTP</name>
        <dbReference type="ChEBI" id="CHEBI:37565"/>
    </ligand>
</feature>
<feature type="binding site" evidence="2">
    <location>
        <begin position="337"/>
        <end position="339"/>
    </location>
    <ligand>
        <name>GTP</name>
        <dbReference type="ChEBI" id="CHEBI:37565"/>
    </ligand>
</feature>
<feature type="binding site" evidence="2">
    <location>
        <begin position="419"/>
        <end position="421"/>
    </location>
    <ligand>
        <name>GTP</name>
        <dbReference type="ChEBI" id="CHEBI:37565"/>
    </ligand>
</feature>
<reference key="1">
    <citation type="journal article" date="2009" name="Genome Res.">
        <title>Comparative genomics of protoploid Saccharomycetaceae.</title>
        <authorList>
            <consortium name="The Genolevures Consortium"/>
            <person name="Souciet J.-L."/>
            <person name="Dujon B."/>
            <person name="Gaillardin C."/>
            <person name="Johnston M."/>
            <person name="Baret P.V."/>
            <person name="Cliften P."/>
            <person name="Sherman D.J."/>
            <person name="Weissenbach J."/>
            <person name="Westhof E."/>
            <person name="Wincker P."/>
            <person name="Jubin C."/>
            <person name="Poulain J."/>
            <person name="Barbe V."/>
            <person name="Segurens B."/>
            <person name="Artiguenave F."/>
            <person name="Anthouard V."/>
            <person name="Vacherie B."/>
            <person name="Val M.-E."/>
            <person name="Fulton R.S."/>
            <person name="Minx P."/>
            <person name="Wilson R."/>
            <person name="Durrens P."/>
            <person name="Jean G."/>
            <person name="Marck C."/>
            <person name="Martin T."/>
            <person name="Nikolski M."/>
            <person name="Rolland T."/>
            <person name="Seret M.-L."/>
            <person name="Casaregola S."/>
            <person name="Despons L."/>
            <person name="Fairhead C."/>
            <person name="Fischer G."/>
            <person name="Lafontaine I."/>
            <person name="Leh V."/>
            <person name="Lemaire M."/>
            <person name="de Montigny J."/>
            <person name="Neuveglise C."/>
            <person name="Thierry A."/>
            <person name="Blanc-Lenfle I."/>
            <person name="Bleykasten C."/>
            <person name="Diffels J."/>
            <person name="Fritsch E."/>
            <person name="Frangeul L."/>
            <person name="Goeffon A."/>
            <person name="Jauniaux N."/>
            <person name="Kachouri-Lafond R."/>
            <person name="Payen C."/>
            <person name="Potier S."/>
            <person name="Pribylova L."/>
            <person name="Ozanne C."/>
            <person name="Richard G.-F."/>
            <person name="Sacerdot C."/>
            <person name="Straub M.-L."/>
            <person name="Talla E."/>
        </authorList>
    </citation>
    <scope>NUCLEOTIDE SEQUENCE [LARGE SCALE GENOMIC DNA]</scope>
    <source>
        <strain>ATCC 56472 / CBS 6340 / NRRL Y-8284</strain>
    </source>
</reference>
<keyword id="KW-0963">Cytoplasm</keyword>
<keyword id="KW-0342">GTP-binding</keyword>
<keyword id="KW-0436">Ligase</keyword>
<keyword id="KW-0460">Magnesium</keyword>
<keyword id="KW-0479">Metal-binding</keyword>
<keyword id="KW-0547">Nucleotide-binding</keyword>
<keyword id="KW-0658">Purine biosynthesis</keyword>
<keyword id="KW-1185">Reference proteome</keyword>
<name>PURA_LACTC</name>
<evidence type="ECO:0000250" key="1"/>
<evidence type="ECO:0000255" key="2">
    <source>
        <dbReference type="HAMAP-Rule" id="MF_03125"/>
    </source>
</evidence>
<organism>
    <name type="scientific">Lachancea thermotolerans (strain ATCC 56472 / CBS 6340 / NRRL Y-8284)</name>
    <name type="common">Yeast</name>
    <name type="synonym">Kluyveromyces thermotolerans</name>
    <dbReference type="NCBI Taxonomy" id="559295"/>
    <lineage>
        <taxon>Eukaryota</taxon>
        <taxon>Fungi</taxon>
        <taxon>Dikarya</taxon>
        <taxon>Ascomycota</taxon>
        <taxon>Saccharomycotina</taxon>
        <taxon>Saccharomycetes</taxon>
        <taxon>Saccharomycetales</taxon>
        <taxon>Saccharomycetaceae</taxon>
        <taxon>Lachancea</taxon>
    </lineage>
</organism>